<keyword id="KW-0963">Cytoplasm</keyword>
<keyword id="KW-0413">Isomerase</keyword>
<keyword id="KW-0627">Porphyrin biosynthesis</keyword>
<keyword id="KW-0663">Pyridoxal phosphate</keyword>
<keyword id="KW-1185">Reference proteome</keyword>
<protein>
    <recommendedName>
        <fullName evidence="1">Glutamate-1-semialdehyde 2,1-aminomutase</fullName>
        <shortName evidence="1">GSA</shortName>
        <ecNumber evidence="1">5.4.3.8</ecNumber>
    </recommendedName>
    <alternativeName>
        <fullName evidence="1">Glutamate-1-semialdehyde aminotransferase</fullName>
        <shortName evidence="1">GSA-AT</shortName>
    </alternativeName>
</protein>
<proteinExistence type="inferred from homology"/>
<organism>
    <name type="scientific">Cupriavidus metallidurans (strain ATCC 43123 / DSM 2839 / NBRC 102507 / CH34)</name>
    <name type="common">Ralstonia metallidurans</name>
    <dbReference type="NCBI Taxonomy" id="266264"/>
    <lineage>
        <taxon>Bacteria</taxon>
        <taxon>Pseudomonadati</taxon>
        <taxon>Pseudomonadota</taxon>
        <taxon>Betaproteobacteria</taxon>
        <taxon>Burkholderiales</taxon>
        <taxon>Burkholderiaceae</taxon>
        <taxon>Cupriavidus</taxon>
    </lineage>
</organism>
<feature type="chain" id="PRO_0000300941" description="Glutamate-1-semialdehyde 2,1-aminomutase">
    <location>
        <begin position="1"/>
        <end position="430"/>
    </location>
</feature>
<feature type="modified residue" description="N6-(pyridoxal phosphate)lysine" evidence="1">
    <location>
        <position position="270"/>
    </location>
</feature>
<accession>Q1LQM3</accession>
<gene>
    <name evidence="1" type="primary">hemL</name>
    <name type="ordered locus">Rmet_0667</name>
</gene>
<dbReference type="EC" id="5.4.3.8" evidence="1"/>
<dbReference type="EMBL" id="CP000352">
    <property type="protein sequence ID" value="ABF07553.1"/>
    <property type="molecule type" value="Genomic_DNA"/>
</dbReference>
<dbReference type="RefSeq" id="WP_011515524.1">
    <property type="nucleotide sequence ID" value="NC_007973.1"/>
</dbReference>
<dbReference type="SMR" id="Q1LQM3"/>
<dbReference type="STRING" id="266264.Rmet_0667"/>
<dbReference type="KEGG" id="rme:Rmet_0667"/>
<dbReference type="eggNOG" id="COG0001">
    <property type="taxonomic scope" value="Bacteria"/>
</dbReference>
<dbReference type="HOGENOM" id="CLU_016922_1_5_4"/>
<dbReference type="UniPathway" id="UPA00251">
    <property type="reaction ID" value="UER00317"/>
</dbReference>
<dbReference type="Proteomes" id="UP000002429">
    <property type="component" value="Chromosome"/>
</dbReference>
<dbReference type="GO" id="GO:0005737">
    <property type="term" value="C:cytoplasm"/>
    <property type="evidence" value="ECO:0007669"/>
    <property type="project" value="UniProtKB-SubCell"/>
</dbReference>
<dbReference type="GO" id="GO:0042286">
    <property type="term" value="F:glutamate-1-semialdehyde 2,1-aminomutase activity"/>
    <property type="evidence" value="ECO:0007669"/>
    <property type="project" value="UniProtKB-UniRule"/>
</dbReference>
<dbReference type="GO" id="GO:0030170">
    <property type="term" value="F:pyridoxal phosphate binding"/>
    <property type="evidence" value="ECO:0007669"/>
    <property type="project" value="InterPro"/>
</dbReference>
<dbReference type="GO" id="GO:0008483">
    <property type="term" value="F:transaminase activity"/>
    <property type="evidence" value="ECO:0007669"/>
    <property type="project" value="InterPro"/>
</dbReference>
<dbReference type="GO" id="GO:0006782">
    <property type="term" value="P:protoporphyrinogen IX biosynthetic process"/>
    <property type="evidence" value="ECO:0007669"/>
    <property type="project" value="UniProtKB-UniRule"/>
</dbReference>
<dbReference type="CDD" id="cd00610">
    <property type="entry name" value="OAT_like"/>
    <property type="match status" value="1"/>
</dbReference>
<dbReference type="FunFam" id="3.40.640.10:FF:000021">
    <property type="entry name" value="Glutamate-1-semialdehyde 2,1-aminomutase"/>
    <property type="match status" value="1"/>
</dbReference>
<dbReference type="Gene3D" id="3.90.1150.10">
    <property type="entry name" value="Aspartate Aminotransferase, domain 1"/>
    <property type="match status" value="1"/>
</dbReference>
<dbReference type="Gene3D" id="3.40.640.10">
    <property type="entry name" value="Type I PLP-dependent aspartate aminotransferase-like (Major domain)"/>
    <property type="match status" value="1"/>
</dbReference>
<dbReference type="HAMAP" id="MF_00375">
    <property type="entry name" value="HemL_aminotrans_3"/>
    <property type="match status" value="1"/>
</dbReference>
<dbReference type="InterPro" id="IPR004639">
    <property type="entry name" value="4pyrrol_synth_GluAld_NH2Trfase"/>
</dbReference>
<dbReference type="InterPro" id="IPR005814">
    <property type="entry name" value="Aminotrans_3"/>
</dbReference>
<dbReference type="InterPro" id="IPR049704">
    <property type="entry name" value="Aminotrans_3_PPA_site"/>
</dbReference>
<dbReference type="InterPro" id="IPR015424">
    <property type="entry name" value="PyrdxlP-dep_Trfase"/>
</dbReference>
<dbReference type="InterPro" id="IPR015421">
    <property type="entry name" value="PyrdxlP-dep_Trfase_major"/>
</dbReference>
<dbReference type="InterPro" id="IPR015422">
    <property type="entry name" value="PyrdxlP-dep_Trfase_small"/>
</dbReference>
<dbReference type="NCBIfam" id="TIGR00713">
    <property type="entry name" value="hemL"/>
    <property type="match status" value="1"/>
</dbReference>
<dbReference type="NCBIfam" id="NF000818">
    <property type="entry name" value="PRK00062.1"/>
    <property type="match status" value="1"/>
</dbReference>
<dbReference type="PANTHER" id="PTHR43713">
    <property type="entry name" value="GLUTAMATE-1-SEMIALDEHYDE 2,1-AMINOMUTASE"/>
    <property type="match status" value="1"/>
</dbReference>
<dbReference type="PANTHER" id="PTHR43713:SF3">
    <property type="entry name" value="GLUTAMATE-1-SEMIALDEHYDE 2,1-AMINOMUTASE 1, CHLOROPLASTIC-RELATED"/>
    <property type="match status" value="1"/>
</dbReference>
<dbReference type="Pfam" id="PF00202">
    <property type="entry name" value="Aminotran_3"/>
    <property type="match status" value="1"/>
</dbReference>
<dbReference type="SUPFAM" id="SSF53383">
    <property type="entry name" value="PLP-dependent transferases"/>
    <property type="match status" value="1"/>
</dbReference>
<dbReference type="PROSITE" id="PS00600">
    <property type="entry name" value="AA_TRANSFER_CLASS_3"/>
    <property type="match status" value="1"/>
</dbReference>
<sequence>MSRNQQLFDRAQQTIPGGVNSPVRAFRSVGGTPRFITRAEGAYMWDADGQRYIDYIGSWGPMIVGHAHPDVVRAVQETATQSFSFGAPTEAEIDMAEEICKLVPSIEQVRLVSSGTEATMSALRLARGFTGRDLIIKFEGCYHGHADSLLVKAGSGLLTFADTTQNAPSSAGVPADVTRHTMVLEYNNVTQLEEAFARHKGEIAAVIVEPVAGNMNLVRASEAFLTAMRNLCSEHGSVLIFDEVMTGFRVALGGAQAHYGIKPDMTCLGKVIGGGMPAAAFGGRRDIMAKLAPLGGVYQAGTLSGNPLAVAAGLTTLRLIQAPGFYDRLATQTRKLADGLTKAAREAGVPFCADAIGGMFGIYFTNEVPGSFAEVTKADVGRFNRFFHAMLAEGVYLAPSAFEAGFVSAKHDDAIIEATVAAAAKAFKAG</sequence>
<reference key="1">
    <citation type="journal article" date="2010" name="PLoS ONE">
        <title>The complete genome sequence of Cupriavidus metallidurans strain CH34, a master survivalist in harsh and anthropogenic environments.</title>
        <authorList>
            <person name="Janssen P.J."/>
            <person name="Van Houdt R."/>
            <person name="Moors H."/>
            <person name="Monsieurs P."/>
            <person name="Morin N."/>
            <person name="Michaux A."/>
            <person name="Benotmane M.A."/>
            <person name="Leys N."/>
            <person name="Vallaeys T."/>
            <person name="Lapidus A."/>
            <person name="Monchy S."/>
            <person name="Medigue C."/>
            <person name="Taghavi S."/>
            <person name="McCorkle S."/>
            <person name="Dunn J."/>
            <person name="van der Lelie D."/>
            <person name="Mergeay M."/>
        </authorList>
    </citation>
    <scope>NUCLEOTIDE SEQUENCE [LARGE SCALE GENOMIC DNA]</scope>
    <source>
        <strain>ATCC 43123 / DSM 2839 / NBRC 102507 / CH34</strain>
    </source>
</reference>
<name>GSA_CUPMC</name>
<evidence type="ECO:0000255" key="1">
    <source>
        <dbReference type="HAMAP-Rule" id="MF_00375"/>
    </source>
</evidence>
<comment type="catalytic activity">
    <reaction evidence="1">
        <text>(S)-4-amino-5-oxopentanoate = 5-aminolevulinate</text>
        <dbReference type="Rhea" id="RHEA:14265"/>
        <dbReference type="ChEBI" id="CHEBI:57501"/>
        <dbReference type="ChEBI" id="CHEBI:356416"/>
        <dbReference type="EC" id="5.4.3.8"/>
    </reaction>
</comment>
<comment type="cofactor">
    <cofactor evidence="1">
        <name>pyridoxal 5'-phosphate</name>
        <dbReference type="ChEBI" id="CHEBI:597326"/>
    </cofactor>
</comment>
<comment type="pathway">
    <text evidence="1">Porphyrin-containing compound metabolism; protoporphyrin-IX biosynthesis; 5-aminolevulinate from L-glutamyl-tRNA(Glu): step 2/2.</text>
</comment>
<comment type="subunit">
    <text evidence="1">Homodimer.</text>
</comment>
<comment type="subcellular location">
    <subcellularLocation>
        <location evidence="1">Cytoplasm</location>
    </subcellularLocation>
</comment>
<comment type="similarity">
    <text evidence="1">Belongs to the class-III pyridoxal-phosphate-dependent aminotransferase family. HemL subfamily.</text>
</comment>